<protein>
    <recommendedName>
        <fullName evidence="1">Protein TusC</fullName>
    </recommendedName>
    <alternativeName>
        <fullName evidence="1">tRNA 2-thiouridine synthesizing protein C</fullName>
    </alternativeName>
</protein>
<evidence type="ECO:0000255" key="1">
    <source>
        <dbReference type="HAMAP-Rule" id="MF_00389"/>
    </source>
</evidence>
<dbReference type="EMBL" id="CP001396">
    <property type="protein sequence ID" value="ACR64591.1"/>
    <property type="molecule type" value="Genomic_DNA"/>
</dbReference>
<dbReference type="RefSeq" id="WP_000820714.1">
    <property type="nucleotide sequence ID" value="NC_012759.1"/>
</dbReference>
<dbReference type="SMR" id="C4ZUJ9"/>
<dbReference type="GeneID" id="93778654"/>
<dbReference type="KEGG" id="ebw:BWG_3035"/>
<dbReference type="HOGENOM" id="CLU_155943_1_0_6"/>
<dbReference type="GO" id="GO:0005737">
    <property type="term" value="C:cytoplasm"/>
    <property type="evidence" value="ECO:0007669"/>
    <property type="project" value="UniProtKB-SubCell"/>
</dbReference>
<dbReference type="GO" id="GO:0008033">
    <property type="term" value="P:tRNA processing"/>
    <property type="evidence" value="ECO:0007669"/>
    <property type="project" value="UniProtKB-UniRule"/>
</dbReference>
<dbReference type="FunFam" id="3.40.1260.10:FF:000004">
    <property type="entry name" value="Sulfurtransferase TusC"/>
    <property type="match status" value="1"/>
</dbReference>
<dbReference type="Gene3D" id="3.40.1260.10">
    <property type="entry name" value="DsrEFH-like"/>
    <property type="match status" value="1"/>
</dbReference>
<dbReference type="HAMAP" id="MF_00389">
    <property type="entry name" value="Thiourid_synth_C"/>
    <property type="match status" value="1"/>
</dbReference>
<dbReference type="InterPro" id="IPR027396">
    <property type="entry name" value="DsrEFH-like"/>
</dbReference>
<dbReference type="InterPro" id="IPR003787">
    <property type="entry name" value="Sulphur_relay_DsrE/F-like"/>
</dbReference>
<dbReference type="InterPro" id="IPR037450">
    <property type="entry name" value="Sulphur_relay_TusC"/>
</dbReference>
<dbReference type="InterPro" id="IPR017462">
    <property type="entry name" value="Sulphur_relay_TusC/DsrF"/>
</dbReference>
<dbReference type="NCBIfam" id="NF001238">
    <property type="entry name" value="PRK00211.1"/>
    <property type="match status" value="1"/>
</dbReference>
<dbReference type="NCBIfam" id="TIGR03010">
    <property type="entry name" value="sulf_tusC_dsrF"/>
    <property type="match status" value="1"/>
</dbReference>
<dbReference type="PANTHER" id="PTHR38780">
    <property type="entry name" value="PROTEIN TUSC"/>
    <property type="match status" value="1"/>
</dbReference>
<dbReference type="PANTHER" id="PTHR38780:SF1">
    <property type="entry name" value="PROTEIN TUSC"/>
    <property type="match status" value="1"/>
</dbReference>
<dbReference type="Pfam" id="PF02635">
    <property type="entry name" value="DsrE"/>
    <property type="match status" value="1"/>
</dbReference>
<dbReference type="SUPFAM" id="SSF75169">
    <property type="entry name" value="DsrEFH-like"/>
    <property type="match status" value="1"/>
</dbReference>
<accession>C4ZUJ9</accession>
<proteinExistence type="inferred from homology"/>
<name>TUSC_ECOBW</name>
<sequence>MKRIAFVFSTAPHGTAAGREGLDALLATSALTDDLAVFFIADGVFQLLPGQKPDAVLARDYIATFKLLGLYDIEQCWVCAASLRERGLDPQTPFVVEATPLEADALRRELANYDVILRF</sequence>
<comment type="function">
    <text evidence="1">Part of a sulfur-relay system required for 2-thiolation of 5-methylaminomethyl-2-thiouridine (mnm(5)s(2)U) at tRNA wobble positions.</text>
</comment>
<comment type="subunit">
    <text evidence="1">Heterohexamer, formed by a dimer of trimers. The hexameric TusBCD complex contains 2 copies each of TusB, TusC and TusD. The TusBCD complex interacts with TusE.</text>
</comment>
<comment type="subcellular location">
    <subcellularLocation>
        <location evidence="1">Cytoplasm</location>
    </subcellularLocation>
</comment>
<comment type="similarity">
    <text evidence="1">Belongs to the DsrF/TusC family.</text>
</comment>
<keyword id="KW-0963">Cytoplasm</keyword>
<keyword id="KW-0819">tRNA processing</keyword>
<gene>
    <name evidence="1" type="primary">tusC</name>
    <name type="ordered locus">BWG_3035</name>
</gene>
<reference key="1">
    <citation type="journal article" date="2009" name="J. Bacteriol.">
        <title>Genomic sequencing reveals regulatory mutations and recombinational events in the widely used MC4100 lineage of Escherichia coli K-12.</title>
        <authorList>
            <person name="Ferenci T."/>
            <person name="Zhou Z."/>
            <person name="Betteridge T."/>
            <person name="Ren Y."/>
            <person name="Liu Y."/>
            <person name="Feng L."/>
            <person name="Reeves P.R."/>
            <person name="Wang L."/>
        </authorList>
    </citation>
    <scope>NUCLEOTIDE SEQUENCE [LARGE SCALE GENOMIC DNA]</scope>
    <source>
        <strain>K12 / MC4100 / BW2952</strain>
    </source>
</reference>
<organism>
    <name type="scientific">Escherichia coli (strain K12 / MC4100 / BW2952)</name>
    <dbReference type="NCBI Taxonomy" id="595496"/>
    <lineage>
        <taxon>Bacteria</taxon>
        <taxon>Pseudomonadati</taxon>
        <taxon>Pseudomonadota</taxon>
        <taxon>Gammaproteobacteria</taxon>
        <taxon>Enterobacterales</taxon>
        <taxon>Enterobacteriaceae</taxon>
        <taxon>Escherichia</taxon>
    </lineage>
</organism>
<feature type="chain" id="PRO_1000205812" description="Protein TusC">
    <location>
        <begin position="1"/>
        <end position="119"/>
    </location>
</feature>